<accession>Q6CSC2</accession>
<evidence type="ECO:0000250" key="1"/>
<evidence type="ECO:0000256" key="2">
    <source>
        <dbReference type="SAM" id="MobiDB-lite"/>
    </source>
</evidence>
<evidence type="ECO:0000305" key="3"/>
<protein>
    <recommendedName>
        <fullName>Increased rDNA silencing protein 4</fullName>
    </recommendedName>
</protein>
<organism>
    <name type="scientific">Kluyveromyces lactis (strain ATCC 8585 / CBS 2359 / DSM 70799 / NBRC 1267 / NRRL Y-1140 / WM37)</name>
    <name type="common">Yeast</name>
    <name type="synonym">Candida sphaerica</name>
    <dbReference type="NCBI Taxonomy" id="284590"/>
    <lineage>
        <taxon>Eukaryota</taxon>
        <taxon>Fungi</taxon>
        <taxon>Dikarya</taxon>
        <taxon>Ascomycota</taxon>
        <taxon>Saccharomycotina</taxon>
        <taxon>Saccharomycetes</taxon>
        <taxon>Saccharomycetales</taxon>
        <taxon>Saccharomycetaceae</taxon>
        <taxon>Kluyveromyces</taxon>
    </lineage>
</organism>
<gene>
    <name type="primary">IRS4</name>
    <name type="ordered locus">KLLA0D02222g</name>
</gene>
<keyword id="KW-0443">Lipid metabolism</keyword>
<keyword id="KW-1185">Reference proteome</keyword>
<feature type="chain" id="PRO_0000308758" description="Increased rDNA silencing protein 4">
    <location>
        <begin position="1"/>
        <end position="638"/>
    </location>
</feature>
<feature type="domain" description="EH">
    <location>
        <begin position="508"/>
        <end position="604"/>
    </location>
</feature>
<feature type="region of interest" description="Disordered" evidence="2">
    <location>
        <begin position="292"/>
        <end position="315"/>
    </location>
</feature>
<feature type="region of interest" description="Disordered" evidence="2">
    <location>
        <begin position="487"/>
        <end position="529"/>
    </location>
</feature>
<feature type="compositionally biased region" description="Basic and acidic residues" evidence="2">
    <location>
        <begin position="494"/>
        <end position="508"/>
    </location>
</feature>
<name>IRS4_KLULA</name>
<comment type="function">
    <text evidence="1">Positive regulator of phosphatidylinositol 4,5-bisphosphate turnover and negatively regulates signaling through the cell integrity pathway. Involved in rDNA silencing (By similarity).</text>
</comment>
<comment type="similarity">
    <text evidence="3">Belongs to the IRS4 family.</text>
</comment>
<dbReference type="EMBL" id="CR382124">
    <property type="protein sequence ID" value="CAH00263.1"/>
    <property type="molecule type" value="Genomic_DNA"/>
</dbReference>
<dbReference type="RefSeq" id="XP_453167.1">
    <property type="nucleotide sequence ID" value="XM_453167.1"/>
</dbReference>
<dbReference type="SMR" id="Q6CSC2"/>
<dbReference type="FunCoup" id="Q6CSC2">
    <property type="interactions" value="35"/>
</dbReference>
<dbReference type="STRING" id="284590.Q6CSC2"/>
<dbReference type="PaxDb" id="284590-Q6CSC2"/>
<dbReference type="KEGG" id="kla:KLLA0_D02222g"/>
<dbReference type="eggNOG" id="KOG0998">
    <property type="taxonomic scope" value="Eukaryota"/>
</dbReference>
<dbReference type="HOGENOM" id="CLU_416228_0_0_1"/>
<dbReference type="InParanoid" id="Q6CSC2"/>
<dbReference type="Proteomes" id="UP000000598">
    <property type="component" value="Chromosome D"/>
</dbReference>
<dbReference type="GO" id="GO:0006629">
    <property type="term" value="P:lipid metabolic process"/>
    <property type="evidence" value="ECO:0007669"/>
    <property type="project" value="UniProtKB-KW"/>
</dbReference>
<dbReference type="CDD" id="cd00052">
    <property type="entry name" value="EH"/>
    <property type="match status" value="1"/>
</dbReference>
<dbReference type="Gene3D" id="1.10.238.10">
    <property type="entry name" value="EF-hand"/>
    <property type="match status" value="1"/>
</dbReference>
<dbReference type="InterPro" id="IPR011992">
    <property type="entry name" value="EF-hand-dom_pair"/>
</dbReference>
<dbReference type="InterPro" id="IPR000261">
    <property type="entry name" value="EH_dom"/>
</dbReference>
<dbReference type="Pfam" id="PF12763">
    <property type="entry name" value="EH"/>
    <property type="match status" value="1"/>
</dbReference>
<dbReference type="SMART" id="SM00027">
    <property type="entry name" value="EH"/>
    <property type="match status" value="1"/>
</dbReference>
<dbReference type="SUPFAM" id="SSF47473">
    <property type="entry name" value="EF-hand"/>
    <property type="match status" value="1"/>
</dbReference>
<sequence length="638" mass="70365">MRFRSRHQVDKPNVIVTQSNRKNEDRLGEDASLKAAQAMFKKHTVSQGFAVSDAPGTKLSLPNSGHGTPAHNVQAMARSSSSSSATSTPINIIRRSPRSSLKGKPMGGLSVSPRTVEGNAALSQQAAAVALENEISGDESIVLVPAGNSNGSMTRSNSSINAIRIVPGGGLSSSRSSSKVSIVKNSPTHSLALADKLNSITLESVYGKPSTATGTATRTLAGRKAPPAAFIDQDSVLSNDKHSENEDTPIKGTISYDTTARMNVPVTYEGTLPDLIPGHQRHKKKKWRNIFGSSATHGSSAGGAIGINGTSASGNDQYENPSGTLSELQLNRAEDNLIVKSVNPTQKTRLQTTLRSNDYDRNSELAAVAGGYSSDESAFSSDSDRELHYATDNHHNNSINNHSSGVYYGNVGGNGVYNGGTAGVGRTKHRAMVRSHKRKSFNEDKPWKSHVDIGYISERERKRYEGIWVTNRNSYLELLPWWNQPLQDEEQEQEQEREMDHESQHGLEEELEEEREQESGQGQEQDADIPEDGLMLNLIVMEIWSRSNLSNQLLGQIYDKVDTRHDGTLNRQSFLTGMWLVDQCLYGRKLPKQIDQRVWDSVDKFVISIPNNNPHHRHRRRKKMLRKELKTIKKDLKT</sequence>
<reference key="1">
    <citation type="journal article" date="2004" name="Nature">
        <title>Genome evolution in yeasts.</title>
        <authorList>
            <person name="Dujon B."/>
            <person name="Sherman D."/>
            <person name="Fischer G."/>
            <person name="Durrens P."/>
            <person name="Casaregola S."/>
            <person name="Lafontaine I."/>
            <person name="de Montigny J."/>
            <person name="Marck C."/>
            <person name="Neuveglise C."/>
            <person name="Talla E."/>
            <person name="Goffard N."/>
            <person name="Frangeul L."/>
            <person name="Aigle M."/>
            <person name="Anthouard V."/>
            <person name="Babour A."/>
            <person name="Barbe V."/>
            <person name="Barnay S."/>
            <person name="Blanchin S."/>
            <person name="Beckerich J.-M."/>
            <person name="Beyne E."/>
            <person name="Bleykasten C."/>
            <person name="Boisrame A."/>
            <person name="Boyer J."/>
            <person name="Cattolico L."/>
            <person name="Confanioleri F."/>
            <person name="de Daruvar A."/>
            <person name="Despons L."/>
            <person name="Fabre E."/>
            <person name="Fairhead C."/>
            <person name="Ferry-Dumazet H."/>
            <person name="Groppi A."/>
            <person name="Hantraye F."/>
            <person name="Hennequin C."/>
            <person name="Jauniaux N."/>
            <person name="Joyet P."/>
            <person name="Kachouri R."/>
            <person name="Kerrest A."/>
            <person name="Koszul R."/>
            <person name="Lemaire M."/>
            <person name="Lesur I."/>
            <person name="Ma L."/>
            <person name="Muller H."/>
            <person name="Nicaud J.-M."/>
            <person name="Nikolski M."/>
            <person name="Oztas S."/>
            <person name="Ozier-Kalogeropoulos O."/>
            <person name="Pellenz S."/>
            <person name="Potier S."/>
            <person name="Richard G.-F."/>
            <person name="Straub M.-L."/>
            <person name="Suleau A."/>
            <person name="Swennen D."/>
            <person name="Tekaia F."/>
            <person name="Wesolowski-Louvel M."/>
            <person name="Westhof E."/>
            <person name="Wirth B."/>
            <person name="Zeniou-Meyer M."/>
            <person name="Zivanovic Y."/>
            <person name="Bolotin-Fukuhara M."/>
            <person name="Thierry A."/>
            <person name="Bouchier C."/>
            <person name="Caudron B."/>
            <person name="Scarpelli C."/>
            <person name="Gaillardin C."/>
            <person name="Weissenbach J."/>
            <person name="Wincker P."/>
            <person name="Souciet J.-L."/>
        </authorList>
    </citation>
    <scope>NUCLEOTIDE SEQUENCE [LARGE SCALE GENOMIC DNA]</scope>
    <source>
        <strain>ATCC 8585 / CBS 2359 / DSM 70799 / NBRC 1267 / NRRL Y-1140 / WM37</strain>
    </source>
</reference>
<proteinExistence type="inferred from homology"/>